<keyword id="KW-0007">Acetylation</keyword>
<keyword id="KW-0539">Nucleus</keyword>
<keyword id="KW-1185">Reference proteome</keyword>
<accession>Q2KIT6</accession>
<name>PNMA2_BOVIN</name>
<gene>
    <name type="primary">PNMA2</name>
</gene>
<comment type="subcellular location">
    <subcellularLocation>
        <location evidence="1">Nucleus</location>
        <location evidence="1">Nucleolus</location>
    </subcellularLocation>
</comment>
<comment type="similarity">
    <text evidence="4">Belongs to the PNMA family.</text>
</comment>
<proteinExistence type="evidence at transcript level"/>
<feature type="initiator methionine" description="Removed" evidence="2">
    <location>
        <position position="1"/>
    </location>
</feature>
<feature type="chain" id="PRO_0000280217" description="Paraneoplastic antigen Ma2 homolog">
    <location>
        <begin position="2"/>
        <end position="364"/>
    </location>
</feature>
<feature type="region of interest" description="Disordered" evidence="3">
    <location>
        <begin position="335"/>
        <end position="364"/>
    </location>
</feature>
<feature type="compositionally biased region" description="Acidic residues" evidence="3">
    <location>
        <begin position="335"/>
        <end position="351"/>
    </location>
</feature>
<feature type="modified residue" description="N-acetylalanine" evidence="2">
    <location>
        <position position="2"/>
    </location>
</feature>
<reference key="1">
    <citation type="submission" date="2006-01" db="EMBL/GenBank/DDBJ databases">
        <authorList>
            <consortium name="NIH - Mammalian Gene Collection (MGC) project"/>
        </authorList>
    </citation>
    <scope>NUCLEOTIDE SEQUENCE [LARGE SCALE MRNA]</scope>
    <source>
        <strain>Hereford</strain>
        <tissue>Hypothalamus</tissue>
    </source>
</reference>
<evidence type="ECO:0000250" key="1"/>
<evidence type="ECO:0000250" key="2">
    <source>
        <dbReference type="UniProtKB" id="Q9UL42"/>
    </source>
</evidence>
<evidence type="ECO:0000256" key="3">
    <source>
        <dbReference type="SAM" id="MobiDB-lite"/>
    </source>
</evidence>
<evidence type="ECO:0000305" key="4"/>
<protein>
    <recommendedName>
        <fullName>Paraneoplastic antigen Ma2 homolog</fullName>
    </recommendedName>
</protein>
<sequence>MALALLEDWCRILSVDDQKSLMVMGIPVDCSEDEIQEVLQEILKPLGRYKLLGKIFRKQENANAVLLELLEDPEVSVIPSKVQGKGGIWKVIFKTPNQDTEFLERLNLFLEKEGQTVSGMFRALGHQGLSPAAMPCISPELLAHVLGQVIAHPPQPLLPMRYRKLRVFSGSAVPAPEEEPFEVWLEQATEIVKEWPVAEAEKKRWLMESLRGPALDLMHIVQADNPSISVEECLEAFKQVFGNLESRRTSQVKYLKTYQEEGEKVSAYVLRLETLLRRAVEKRAIPRNIADQIRLEQVMAGASLSEVLWCRLRELKDQGRPPSFLQLMKVIREEEEEEATFENENTEEPEGGDGYGHWGNEAND</sequence>
<organism>
    <name type="scientific">Bos taurus</name>
    <name type="common">Bovine</name>
    <dbReference type="NCBI Taxonomy" id="9913"/>
    <lineage>
        <taxon>Eukaryota</taxon>
        <taxon>Metazoa</taxon>
        <taxon>Chordata</taxon>
        <taxon>Craniata</taxon>
        <taxon>Vertebrata</taxon>
        <taxon>Euteleostomi</taxon>
        <taxon>Mammalia</taxon>
        <taxon>Eutheria</taxon>
        <taxon>Laurasiatheria</taxon>
        <taxon>Artiodactyla</taxon>
        <taxon>Ruminantia</taxon>
        <taxon>Pecora</taxon>
        <taxon>Bovidae</taxon>
        <taxon>Bovinae</taxon>
        <taxon>Bos</taxon>
    </lineage>
</organism>
<dbReference type="EMBL" id="BC112516">
    <property type="protein sequence ID" value="AAI12517.1"/>
    <property type="molecule type" value="mRNA"/>
</dbReference>
<dbReference type="RefSeq" id="NP_001039938.1">
    <property type="nucleotide sequence ID" value="NM_001046473.2"/>
</dbReference>
<dbReference type="SMR" id="Q2KIT6"/>
<dbReference type="FunCoup" id="Q2KIT6">
    <property type="interactions" value="561"/>
</dbReference>
<dbReference type="STRING" id="9913.ENSBTAP00000049545"/>
<dbReference type="PaxDb" id="9913-ENSBTAP00000049545"/>
<dbReference type="GeneID" id="540301"/>
<dbReference type="KEGG" id="bta:540301"/>
<dbReference type="CTD" id="10687"/>
<dbReference type="eggNOG" id="ENOG502RWTN">
    <property type="taxonomic scope" value="Eukaryota"/>
</dbReference>
<dbReference type="InParanoid" id="Q2KIT6"/>
<dbReference type="OrthoDB" id="115435at2759"/>
<dbReference type="Proteomes" id="UP000009136">
    <property type="component" value="Unplaced"/>
</dbReference>
<dbReference type="GO" id="GO:0005730">
    <property type="term" value="C:nucleolus"/>
    <property type="evidence" value="ECO:0007669"/>
    <property type="project" value="UniProtKB-SubCell"/>
</dbReference>
<dbReference type="InterPro" id="IPR026523">
    <property type="entry name" value="PNMA"/>
</dbReference>
<dbReference type="InterPro" id="IPR048270">
    <property type="entry name" value="PNMA_C"/>
</dbReference>
<dbReference type="InterPro" id="IPR048271">
    <property type="entry name" value="PNMA_N"/>
</dbReference>
<dbReference type="PANTHER" id="PTHR23095">
    <property type="entry name" value="PARANEOPLASTIC ANTIGEN"/>
    <property type="match status" value="1"/>
</dbReference>
<dbReference type="PANTHER" id="PTHR23095:SF16">
    <property type="entry name" value="PARANEOPLASTIC ANTIGEN MA2"/>
    <property type="match status" value="1"/>
</dbReference>
<dbReference type="Pfam" id="PF14893">
    <property type="entry name" value="PNMA"/>
    <property type="match status" value="1"/>
</dbReference>
<dbReference type="Pfam" id="PF20846">
    <property type="entry name" value="PNMA_N"/>
    <property type="match status" value="1"/>
</dbReference>